<accession>B6HZF9</accession>
<keyword id="KW-0067">ATP-binding</keyword>
<keyword id="KW-0963">Cytoplasm</keyword>
<keyword id="KW-0275">Fatty acid biosynthesis</keyword>
<keyword id="KW-0276">Fatty acid metabolism</keyword>
<keyword id="KW-0444">Lipid biosynthesis</keyword>
<keyword id="KW-0443">Lipid metabolism</keyword>
<keyword id="KW-0547">Nucleotide-binding</keyword>
<keyword id="KW-0808">Transferase</keyword>
<proteinExistence type="inferred from homology"/>
<feature type="chain" id="PRO_1000134488" description="Acetyl-coenzyme A carboxylase carboxyl transferase subunit alpha">
    <location>
        <begin position="1"/>
        <end position="319"/>
    </location>
</feature>
<feature type="domain" description="CoA carboxyltransferase C-terminal" evidence="2">
    <location>
        <begin position="35"/>
        <end position="296"/>
    </location>
</feature>
<sequence>MSLNFLDFEQPIAELEAKIDSLTAVSRQDEKLDINIDEEVHRLREKSVELTRKIFADLGAWQIAQLARHPQRPYTLDYVRLAFDEFDELAGDRAYADDKAIVGGIARLDGRPVMIIGHQKGRETKEKIRRNFGMPAPEGYRKALRLMQMAERFKMPIITFIDTPGAYPGVGAEERGQSEAIARNLREMSRLGVPVVCTVIGEGGSGGALAIGVGDKVNMLQYSTYSVISPEGCASILWKSADKAPLAAEAMGIIAPRLKELKLIDSIIPEPLGGAHRNPEAMAASLKAQLLADLADLDVLSTEDLKNRRYQRLMSYGYA</sequence>
<evidence type="ECO:0000255" key="1">
    <source>
        <dbReference type="HAMAP-Rule" id="MF_00823"/>
    </source>
</evidence>
<evidence type="ECO:0000255" key="2">
    <source>
        <dbReference type="PROSITE-ProRule" id="PRU01137"/>
    </source>
</evidence>
<gene>
    <name evidence="1" type="primary">accA</name>
    <name type="ordered locus">ECSE_0184</name>
</gene>
<name>ACCA_ECOSE</name>
<protein>
    <recommendedName>
        <fullName evidence="1">Acetyl-coenzyme A carboxylase carboxyl transferase subunit alpha</fullName>
        <shortName evidence="1">ACCase subunit alpha</shortName>
        <shortName evidence="1">Acetyl-CoA carboxylase carboxyltransferase subunit alpha</shortName>
        <ecNumber evidence="1">2.1.3.15</ecNumber>
    </recommendedName>
</protein>
<organism>
    <name type="scientific">Escherichia coli (strain SE11)</name>
    <dbReference type="NCBI Taxonomy" id="409438"/>
    <lineage>
        <taxon>Bacteria</taxon>
        <taxon>Pseudomonadati</taxon>
        <taxon>Pseudomonadota</taxon>
        <taxon>Gammaproteobacteria</taxon>
        <taxon>Enterobacterales</taxon>
        <taxon>Enterobacteriaceae</taxon>
        <taxon>Escherichia</taxon>
    </lineage>
</organism>
<reference key="1">
    <citation type="journal article" date="2008" name="DNA Res.">
        <title>Complete genome sequence and comparative analysis of the wild-type commensal Escherichia coli strain SE11 isolated from a healthy adult.</title>
        <authorList>
            <person name="Oshima K."/>
            <person name="Toh H."/>
            <person name="Ogura Y."/>
            <person name="Sasamoto H."/>
            <person name="Morita H."/>
            <person name="Park S.-H."/>
            <person name="Ooka T."/>
            <person name="Iyoda S."/>
            <person name="Taylor T.D."/>
            <person name="Hayashi T."/>
            <person name="Itoh K."/>
            <person name="Hattori M."/>
        </authorList>
    </citation>
    <scope>NUCLEOTIDE SEQUENCE [LARGE SCALE GENOMIC DNA]</scope>
    <source>
        <strain>SE11</strain>
    </source>
</reference>
<comment type="function">
    <text evidence="1">Component of the acetyl coenzyme A carboxylase (ACC) complex. First, biotin carboxylase catalyzes the carboxylation of biotin on its carrier protein (BCCP) and then the CO(2) group is transferred by the carboxyltransferase to acetyl-CoA to form malonyl-CoA.</text>
</comment>
<comment type="catalytic activity">
    <reaction evidence="1">
        <text>N(6)-carboxybiotinyl-L-lysyl-[protein] + acetyl-CoA = N(6)-biotinyl-L-lysyl-[protein] + malonyl-CoA</text>
        <dbReference type="Rhea" id="RHEA:54728"/>
        <dbReference type="Rhea" id="RHEA-COMP:10505"/>
        <dbReference type="Rhea" id="RHEA-COMP:10506"/>
        <dbReference type="ChEBI" id="CHEBI:57288"/>
        <dbReference type="ChEBI" id="CHEBI:57384"/>
        <dbReference type="ChEBI" id="CHEBI:83144"/>
        <dbReference type="ChEBI" id="CHEBI:83145"/>
        <dbReference type="EC" id="2.1.3.15"/>
    </reaction>
</comment>
<comment type="pathway">
    <text evidence="1">Lipid metabolism; malonyl-CoA biosynthesis; malonyl-CoA from acetyl-CoA: step 1/1.</text>
</comment>
<comment type="subunit">
    <text evidence="1">Acetyl-CoA carboxylase is a heterohexamer composed of biotin carboxyl carrier protein (AccB), biotin carboxylase (AccC) and two subunits each of ACCase subunit alpha (AccA) and ACCase subunit beta (AccD).</text>
</comment>
<comment type="subcellular location">
    <subcellularLocation>
        <location evidence="1">Cytoplasm</location>
    </subcellularLocation>
</comment>
<comment type="similarity">
    <text evidence="1">Belongs to the AccA family.</text>
</comment>
<dbReference type="EC" id="2.1.3.15" evidence="1"/>
<dbReference type="EMBL" id="AP009240">
    <property type="protein sequence ID" value="BAG75708.1"/>
    <property type="molecule type" value="Genomic_DNA"/>
</dbReference>
<dbReference type="RefSeq" id="WP_000055741.1">
    <property type="nucleotide sequence ID" value="NC_011415.1"/>
</dbReference>
<dbReference type="SMR" id="B6HZF9"/>
<dbReference type="GeneID" id="86945115"/>
<dbReference type="KEGG" id="ecy:ECSE_0184"/>
<dbReference type="HOGENOM" id="CLU_015486_0_2_6"/>
<dbReference type="UniPathway" id="UPA00655">
    <property type="reaction ID" value="UER00711"/>
</dbReference>
<dbReference type="Proteomes" id="UP000008199">
    <property type="component" value="Chromosome"/>
</dbReference>
<dbReference type="GO" id="GO:0009317">
    <property type="term" value="C:acetyl-CoA carboxylase complex"/>
    <property type="evidence" value="ECO:0007669"/>
    <property type="project" value="InterPro"/>
</dbReference>
<dbReference type="GO" id="GO:0003989">
    <property type="term" value="F:acetyl-CoA carboxylase activity"/>
    <property type="evidence" value="ECO:0007669"/>
    <property type="project" value="InterPro"/>
</dbReference>
<dbReference type="GO" id="GO:0005524">
    <property type="term" value="F:ATP binding"/>
    <property type="evidence" value="ECO:0007669"/>
    <property type="project" value="UniProtKB-KW"/>
</dbReference>
<dbReference type="GO" id="GO:0016743">
    <property type="term" value="F:carboxyl- or carbamoyltransferase activity"/>
    <property type="evidence" value="ECO:0007669"/>
    <property type="project" value="UniProtKB-UniRule"/>
</dbReference>
<dbReference type="GO" id="GO:0006633">
    <property type="term" value="P:fatty acid biosynthetic process"/>
    <property type="evidence" value="ECO:0007669"/>
    <property type="project" value="UniProtKB-KW"/>
</dbReference>
<dbReference type="GO" id="GO:2001295">
    <property type="term" value="P:malonyl-CoA biosynthetic process"/>
    <property type="evidence" value="ECO:0007669"/>
    <property type="project" value="UniProtKB-UniRule"/>
</dbReference>
<dbReference type="FunFam" id="3.90.226.10:FF:000008">
    <property type="entry name" value="Acetyl-coenzyme A carboxylase carboxyl transferase subunit alpha"/>
    <property type="match status" value="1"/>
</dbReference>
<dbReference type="Gene3D" id="3.90.226.10">
    <property type="entry name" value="2-enoyl-CoA Hydratase, Chain A, domain 1"/>
    <property type="match status" value="1"/>
</dbReference>
<dbReference type="HAMAP" id="MF_00823">
    <property type="entry name" value="AcetylCoA_CT_alpha"/>
    <property type="match status" value="1"/>
</dbReference>
<dbReference type="InterPro" id="IPR001095">
    <property type="entry name" value="Acetyl_CoA_COase_a_su"/>
</dbReference>
<dbReference type="InterPro" id="IPR029045">
    <property type="entry name" value="ClpP/crotonase-like_dom_sf"/>
</dbReference>
<dbReference type="InterPro" id="IPR011763">
    <property type="entry name" value="COA_CT_C"/>
</dbReference>
<dbReference type="NCBIfam" id="TIGR00513">
    <property type="entry name" value="accA"/>
    <property type="match status" value="1"/>
</dbReference>
<dbReference type="NCBIfam" id="NF041504">
    <property type="entry name" value="AccA_sub"/>
    <property type="match status" value="1"/>
</dbReference>
<dbReference type="NCBIfam" id="NF004344">
    <property type="entry name" value="PRK05724.1"/>
    <property type="match status" value="1"/>
</dbReference>
<dbReference type="PANTHER" id="PTHR42853">
    <property type="entry name" value="ACETYL-COENZYME A CARBOXYLASE CARBOXYL TRANSFERASE SUBUNIT ALPHA"/>
    <property type="match status" value="1"/>
</dbReference>
<dbReference type="PANTHER" id="PTHR42853:SF3">
    <property type="entry name" value="ACETYL-COENZYME A CARBOXYLASE CARBOXYL TRANSFERASE SUBUNIT ALPHA, CHLOROPLASTIC"/>
    <property type="match status" value="1"/>
</dbReference>
<dbReference type="Pfam" id="PF03255">
    <property type="entry name" value="ACCA"/>
    <property type="match status" value="1"/>
</dbReference>
<dbReference type="PRINTS" id="PR01069">
    <property type="entry name" value="ACCCTRFRASEA"/>
</dbReference>
<dbReference type="SUPFAM" id="SSF52096">
    <property type="entry name" value="ClpP/crotonase"/>
    <property type="match status" value="1"/>
</dbReference>
<dbReference type="PROSITE" id="PS50989">
    <property type="entry name" value="COA_CT_CTER"/>
    <property type="match status" value="1"/>
</dbReference>